<feature type="initiator methionine" description="Removed" evidence="1">
    <location>
        <position position="1"/>
    </location>
</feature>
<feature type="chain" id="PRO_0000319299" description="Small ribosomal subunit protein uS13">
    <location>
        <begin position="2"/>
        <end position="152"/>
    </location>
</feature>
<feature type="modified residue" description="N-acetylserine" evidence="1">
    <location>
        <position position="2"/>
    </location>
</feature>
<feature type="modified residue" description="N6-acetyllysine; alternate" evidence="1">
    <location>
        <position position="94"/>
    </location>
</feature>
<feature type="modified residue" description="N6-acetyllysine; alternate" evidence="1">
    <location>
        <position position="106"/>
    </location>
</feature>
<feature type="cross-link" description="Glycyl lysine isopeptide (Lys-Gly) (interchain with G-Cter in SUMO2)" evidence="1">
    <location>
        <position position="91"/>
    </location>
</feature>
<feature type="cross-link" description="Glycyl lysine isopeptide (Lys-Gly) (interchain with G-Cter in SUMO2); alternate" evidence="1">
    <location>
        <position position="94"/>
    </location>
</feature>
<feature type="cross-link" description="Glycyl lysine isopeptide (Lys-Gly) (interchain with G-Cter in SUMO2); alternate" evidence="1">
    <location>
        <position position="106"/>
    </location>
</feature>
<sequence length="152" mass="17719">MSLVIPEKFQHILRVLNTNIDGRRKIAFAITAIKGVGRRYAHVVLRKADIDLTKRAGELTEDEVERVITIMQNPRQYKIPDWFLNRQKDVKDGKYSQVLANGLDNKLREDLERLKKIRAHRGLRHFWGLRVRGQHTKTTGRRGRTVGVSKKK</sequence>
<gene>
    <name type="primary">RPS18</name>
</gene>
<keyword id="KW-0007">Acetylation</keyword>
<keyword id="KW-0963">Cytoplasm</keyword>
<keyword id="KW-1017">Isopeptide bond</keyword>
<keyword id="KW-1185">Reference proteome</keyword>
<keyword id="KW-0687">Ribonucleoprotein</keyword>
<keyword id="KW-0689">Ribosomal protein</keyword>
<keyword id="KW-0694">RNA-binding</keyword>
<keyword id="KW-0699">rRNA-binding</keyword>
<keyword id="KW-0832">Ubl conjugation</keyword>
<reference key="1">
    <citation type="submission" date="2007-04" db="EMBL/GenBank/DDBJ databases">
        <title>Primary expression profile analysis and novel gene discovery of Xinong Saanen dairy goat mammary gland.</title>
        <authorList>
            <person name="Han X.F."/>
            <person name="Luo J."/>
            <person name="Wu N."/>
            <person name="Matand K."/>
            <person name="Yang B.J."/>
            <person name="Wu H.J."/>
            <person name="Zhang L.J."/>
            <person name="Wang H.B."/>
            <person name="Qi Y."/>
        </authorList>
    </citation>
    <scope>NUCLEOTIDE SEQUENCE [LARGE SCALE MRNA]</scope>
    <source>
        <strain>Xinong Saanen</strain>
        <tissue>Mammary gland</tissue>
    </source>
</reference>
<evidence type="ECO:0000250" key="1">
    <source>
        <dbReference type="UniProtKB" id="P62269"/>
    </source>
</evidence>
<evidence type="ECO:0000305" key="2"/>
<organism>
    <name type="scientific">Capra hircus</name>
    <name type="common">Goat</name>
    <dbReference type="NCBI Taxonomy" id="9925"/>
    <lineage>
        <taxon>Eukaryota</taxon>
        <taxon>Metazoa</taxon>
        <taxon>Chordata</taxon>
        <taxon>Craniata</taxon>
        <taxon>Vertebrata</taxon>
        <taxon>Euteleostomi</taxon>
        <taxon>Mammalia</taxon>
        <taxon>Eutheria</taxon>
        <taxon>Laurasiatheria</taxon>
        <taxon>Artiodactyla</taxon>
        <taxon>Ruminantia</taxon>
        <taxon>Pecora</taxon>
        <taxon>Bovidae</taxon>
        <taxon>Caprinae</taxon>
        <taxon>Capra</taxon>
    </lineage>
</organism>
<comment type="function">
    <text evidence="1">Component of the small ribosomal subunit. The ribosome is a large ribonucleoprotein complex responsible for the synthesis of proteins in the cell.</text>
</comment>
<comment type="subunit">
    <text evidence="1">Component of the small ribosomal subunit.</text>
</comment>
<comment type="subcellular location">
    <subcellularLocation>
        <location evidence="1">Cytoplasm</location>
    </subcellularLocation>
</comment>
<comment type="similarity">
    <text evidence="2">Belongs to the universal ribosomal protein uS13 family.</text>
</comment>
<protein>
    <recommendedName>
        <fullName evidence="2">Small ribosomal subunit protein uS13</fullName>
    </recommendedName>
    <alternativeName>
        <fullName>40S ribosomal protein S18</fullName>
    </alternativeName>
</protein>
<proteinExistence type="evidence at transcript level"/>
<dbReference type="EMBL" id="EF564275">
    <property type="protein sequence ID" value="ABQ51201.1"/>
    <property type="molecule type" value="mRNA"/>
</dbReference>
<dbReference type="RefSeq" id="NP_001272568.1">
    <property type="nucleotide sequence ID" value="NM_001285639.1"/>
</dbReference>
<dbReference type="SMR" id="A5JST6"/>
<dbReference type="STRING" id="9925.ENSCHIP00000030566"/>
<dbReference type="Ensembl" id="ENSCHIT00020026636">
    <property type="protein sequence ID" value="ENSCHIP00020019549"/>
    <property type="gene ID" value="ENSCHIG00020012884"/>
</dbReference>
<dbReference type="Ensembl" id="ENSCHIT00040059099">
    <property type="protein sequence ID" value="ENSCHIP00040047062"/>
    <property type="gene ID" value="ENSCHIG00040027608"/>
</dbReference>
<dbReference type="GeneID" id="100860783"/>
<dbReference type="KEGG" id="chx:100860783"/>
<dbReference type="CTD" id="6222"/>
<dbReference type="OrthoDB" id="1702480at2759"/>
<dbReference type="Proteomes" id="UP000291000">
    <property type="component" value="Unassembled WGS sequence"/>
</dbReference>
<dbReference type="Proteomes" id="UP000694566">
    <property type="component" value="Unplaced"/>
</dbReference>
<dbReference type="GO" id="GO:0022626">
    <property type="term" value="C:cytosolic ribosome"/>
    <property type="evidence" value="ECO:0007669"/>
    <property type="project" value="UniProtKB-ARBA"/>
</dbReference>
<dbReference type="GO" id="GO:0015935">
    <property type="term" value="C:small ribosomal subunit"/>
    <property type="evidence" value="ECO:0007669"/>
    <property type="project" value="TreeGrafter"/>
</dbReference>
<dbReference type="GO" id="GO:0019843">
    <property type="term" value="F:rRNA binding"/>
    <property type="evidence" value="ECO:0007669"/>
    <property type="project" value="UniProtKB-KW"/>
</dbReference>
<dbReference type="GO" id="GO:0003735">
    <property type="term" value="F:structural constituent of ribosome"/>
    <property type="evidence" value="ECO:0007669"/>
    <property type="project" value="InterPro"/>
</dbReference>
<dbReference type="GO" id="GO:0006412">
    <property type="term" value="P:translation"/>
    <property type="evidence" value="ECO:0007669"/>
    <property type="project" value="InterPro"/>
</dbReference>
<dbReference type="FunFam" id="1.10.8.50:FF:000002">
    <property type="entry name" value="40S ribosomal protein S18"/>
    <property type="match status" value="1"/>
</dbReference>
<dbReference type="FunFam" id="4.10.910.10:FF:000002">
    <property type="entry name" value="40S ribosomal protein S18"/>
    <property type="match status" value="1"/>
</dbReference>
<dbReference type="Gene3D" id="1.10.8.50">
    <property type="match status" value="1"/>
</dbReference>
<dbReference type="Gene3D" id="4.10.910.10">
    <property type="entry name" value="30s ribosomal protein s13, domain 2"/>
    <property type="match status" value="1"/>
</dbReference>
<dbReference type="HAMAP" id="MF_01315">
    <property type="entry name" value="Ribosomal_uS13"/>
    <property type="match status" value="1"/>
</dbReference>
<dbReference type="InterPro" id="IPR027437">
    <property type="entry name" value="Rbsml_uS13_C"/>
</dbReference>
<dbReference type="InterPro" id="IPR001892">
    <property type="entry name" value="Ribosomal_uS13"/>
</dbReference>
<dbReference type="InterPro" id="IPR010979">
    <property type="entry name" value="Ribosomal_uS13-like_H2TH"/>
</dbReference>
<dbReference type="InterPro" id="IPR018269">
    <property type="entry name" value="Ribosomal_uS13_CS"/>
</dbReference>
<dbReference type="NCBIfam" id="NF003140">
    <property type="entry name" value="PRK04053.1"/>
    <property type="match status" value="1"/>
</dbReference>
<dbReference type="PANTHER" id="PTHR10871">
    <property type="entry name" value="30S RIBOSOMAL PROTEIN S13/40S RIBOSOMAL PROTEIN S18"/>
    <property type="match status" value="1"/>
</dbReference>
<dbReference type="PANTHER" id="PTHR10871:SF42">
    <property type="entry name" value="SMALL RIBOSOMAL SUBUNIT PROTEIN US13"/>
    <property type="match status" value="1"/>
</dbReference>
<dbReference type="Pfam" id="PF00416">
    <property type="entry name" value="Ribosomal_S13"/>
    <property type="match status" value="1"/>
</dbReference>
<dbReference type="PIRSF" id="PIRSF002134">
    <property type="entry name" value="Ribosomal_S13"/>
    <property type="match status" value="1"/>
</dbReference>
<dbReference type="SUPFAM" id="SSF46946">
    <property type="entry name" value="S13-like H2TH domain"/>
    <property type="match status" value="1"/>
</dbReference>
<dbReference type="PROSITE" id="PS00646">
    <property type="entry name" value="RIBOSOMAL_S13_1"/>
    <property type="match status" value="1"/>
</dbReference>
<dbReference type="PROSITE" id="PS50159">
    <property type="entry name" value="RIBOSOMAL_S13_2"/>
    <property type="match status" value="1"/>
</dbReference>
<accession>A5JST6</accession>
<name>RS18_CAPHI</name>